<protein>
    <recommendedName>
        <fullName evidence="16">AT-hook motif nuclear-localized protein 27</fullName>
    </recommendedName>
    <alternativeName>
        <fullName evidence="10">DNA-binding protein ESCAROLA</fullName>
    </alternativeName>
    <alternativeName>
        <fullName evidence="12">Protein ORESARA 7</fullName>
    </alternativeName>
</protein>
<organism>
    <name type="scientific">Arabidopsis thaliana</name>
    <name type="common">Mouse-ear cress</name>
    <dbReference type="NCBI Taxonomy" id="3702"/>
    <lineage>
        <taxon>Eukaryota</taxon>
        <taxon>Viridiplantae</taxon>
        <taxon>Streptophyta</taxon>
        <taxon>Embryophyta</taxon>
        <taxon>Tracheophyta</taxon>
        <taxon>Spermatophyta</taxon>
        <taxon>Magnoliopsida</taxon>
        <taxon>eudicotyledons</taxon>
        <taxon>Gunneridae</taxon>
        <taxon>Pentapetalae</taxon>
        <taxon>rosids</taxon>
        <taxon>malvids</taxon>
        <taxon>Brassicales</taxon>
        <taxon>Brassicaceae</taxon>
        <taxon>Camelineae</taxon>
        <taxon>Arabidopsis</taxon>
    </lineage>
</organism>
<reference key="1">
    <citation type="journal article" date="2000" name="Plant Physiol.">
        <title>Activation tagging in Arabidopsis.</title>
        <authorList>
            <person name="Weigel D."/>
            <person name="Ahn J.H."/>
            <person name="Blazquez M.A."/>
            <person name="Borevitz J.O."/>
            <person name="Christensen S.K."/>
            <person name="Fankhauser C."/>
            <person name="Ferrandiz C."/>
            <person name="Kardailsky I."/>
            <person name="Malancharuvil E.J."/>
            <person name="Neff M.M."/>
            <person name="Nguyen J.T."/>
            <person name="Sato S."/>
            <person name="Wang Z.Y."/>
            <person name="Xia Y."/>
            <person name="Dixon R.A."/>
            <person name="Harrison M.J."/>
            <person name="Lamb C.J."/>
            <person name="Yanofsky M.F."/>
            <person name="Chory J."/>
        </authorList>
    </citation>
    <scope>NUCLEOTIDE SEQUENCE [MRNA]</scope>
    <source>
        <strain>cv. Columbia</strain>
    </source>
</reference>
<reference key="2">
    <citation type="journal article" date="2000" name="Nature">
        <title>Sequence and analysis of chromosome 1 of the plant Arabidopsis thaliana.</title>
        <authorList>
            <person name="Theologis A."/>
            <person name="Ecker J.R."/>
            <person name="Palm C.J."/>
            <person name="Federspiel N.A."/>
            <person name="Kaul S."/>
            <person name="White O."/>
            <person name="Alonso J."/>
            <person name="Altafi H."/>
            <person name="Araujo R."/>
            <person name="Bowman C.L."/>
            <person name="Brooks S.Y."/>
            <person name="Buehler E."/>
            <person name="Chan A."/>
            <person name="Chao Q."/>
            <person name="Chen H."/>
            <person name="Cheuk R.F."/>
            <person name="Chin C.W."/>
            <person name="Chung M.K."/>
            <person name="Conn L."/>
            <person name="Conway A.B."/>
            <person name="Conway A.R."/>
            <person name="Creasy T.H."/>
            <person name="Dewar K."/>
            <person name="Dunn P."/>
            <person name="Etgu P."/>
            <person name="Feldblyum T.V."/>
            <person name="Feng J.-D."/>
            <person name="Fong B."/>
            <person name="Fujii C.Y."/>
            <person name="Gill J.E."/>
            <person name="Goldsmith A.D."/>
            <person name="Haas B."/>
            <person name="Hansen N.F."/>
            <person name="Hughes B."/>
            <person name="Huizar L."/>
            <person name="Hunter J.L."/>
            <person name="Jenkins J."/>
            <person name="Johnson-Hopson C."/>
            <person name="Khan S."/>
            <person name="Khaykin E."/>
            <person name="Kim C.J."/>
            <person name="Koo H.L."/>
            <person name="Kremenetskaia I."/>
            <person name="Kurtz D.B."/>
            <person name="Kwan A."/>
            <person name="Lam B."/>
            <person name="Langin-Hooper S."/>
            <person name="Lee A."/>
            <person name="Lee J.M."/>
            <person name="Lenz C.A."/>
            <person name="Li J.H."/>
            <person name="Li Y.-P."/>
            <person name="Lin X."/>
            <person name="Liu S.X."/>
            <person name="Liu Z.A."/>
            <person name="Luros J.S."/>
            <person name="Maiti R."/>
            <person name="Marziali A."/>
            <person name="Militscher J."/>
            <person name="Miranda M."/>
            <person name="Nguyen M."/>
            <person name="Nierman W.C."/>
            <person name="Osborne B.I."/>
            <person name="Pai G."/>
            <person name="Peterson J."/>
            <person name="Pham P.K."/>
            <person name="Rizzo M."/>
            <person name="Rooney T."/>
            <person name="Rowley D."/>
            <person name="Sakano H."/>
            <person name="Salzberg S.L."/>
            <person name="Schwartz J.R."/>
            <person name="Shinn P."/>
            <person name="Southwick A.M."/>
            <person name="Sun H."/>
            <person name="Tallon L.J."/>
            <person name="Tambunga G."/>
            <person name="Toriumi M.J."/>
            <person name="Town C.D."/>
            <person name="Utterback T."/>
            <person name="Van Aken S."/>
            <person name="Vaysberg M."/>
            <person name="Vysotskaia V.S."/>
            <person name="Walker M."/>
            <person name="Wu D."/>
            <person name="Yu G."/>
            <person name="Fraser C.M."/>
            <person name="Venter J.C."/>
            <person name="Davis R.W."/>
        </authorList>
    </citation>
    <scope>NUCLEOTIDE SEQUENCE [LARGE SCALE GENOMIC DNA]</scope>
    <source>
        <strain>cv. Columbia</strain>
    </source>
</reference>
<reference key="3">
    <citation type="journal article" date="2017" name="Plant J.">
        <title>Araport11: a complete reannotation of the Arabidopsis thaliana reference genome.</title>
        <authorList>
            <person name="Cheng C.Y."/>
            <person name="Krishnakumar V."/>
            <person name="Chan A.P."/>
            <person name="Thibaud-Nissen F."/>
            <person name="Schobel S."/>
            <person name="Town C.D."/>
        </authorList>
    </citation>
    <scope>GENOME REANNOTATION</scope>
    <source>
        <strain>cv. Columbia</strain>
    </source>
</reference>
<reference key="4">
    <citation type="journal article" date="2003" name="Science">
        <title>Empirical analysis of transcriptional activity in the Arabidopsis genome.</title>
        <authorList>
            <person name="Yamada K."/>
            <person name="Lim J."/>
            <person name="Dale J.M."/>
            <person name="Chen H."/>
            <person name="Shinn P."/>
            <person name="Palm C.J."/>
            <person name="Southwick A.M."/>
            <person name="Wu H.C."/>
            <person name="Kim C.J."/>
            <person name="Nguyen M."/>
            <person name="Pham P.K."/>
            <person name="Cheuk R.F."/>
            <person name="Karlin-Newmann G."/>
            <person name="Liu S.X."/>
            <person name="Lam B."/>
            <person name="Sakano H."/>
            <person name="Wu T."/>
            <person name="Yu G."/>
            <person name="Miranda M."/>
            <person name="Quach H.L."/>
            <person name="Tripp M."/>
            <person name="Chang C.H."/>
            <person name="Lee J.M."/>
            <person name="Toriumi M.J."/>
            <person name="Chan M.M."/>
            <person name="Tang C.C."/>
            <person name="Onodera C.S."/>
            <person name="Deng J.M."/>
            <person name="Akiyama K."/>
            <person name="Ansari Y."/>
            <person name="Arakawa T."/>
            <person name="Banh J."/>
            <person name="Banno F."/>
            <person name="Bowser L."/>
            <person name="Brooks S.Y."/>
            <person name="Carninci P."/>
            <person name="Chao Q."/>
            <person name="Choy N."/>
            <person name="Enju A."/>
            <person name="Goldsmith A.D."/>
            <person name="Gurjal M."/>
            <person name="Hansen N.F."/>
            <person name="Hayashizaki Y."/>
            <person name="Johnson-Hopson C."/>
            <person name="Hsuan V.W."/>
            <person name="Iida K."/>
            <person name="Karnes M."/>
            <person name="Khan S."/>
            <person name="Koesema E."/>
            <person name="Ishida J."/>
            <person name="Jiang P.X."/>
            <person name="Jones T."/>
            <person name="Kawai J."/>
            <person name="Kamiya A."/>
            <person name="Meyers C."/>
            <person name="Nakajima M."/>
            <person name="Narusaka M."/>
            <person name="Seki M."/>
            <person name="Sakurai T."/>
            <person name="Satou M."/>
            <person name="Tamse R."/>
            <person name="Vaysberg M."/>
            <person name="Wallender E.K."/>
            <person name="Wong C."/>
            <person name="Yamamura Y."/>
            <person name="Yuan S."/>
            <person name="Shinozaki K."/>
            <person name="Davis R.W."/>
            <person name="Theologis A."/>
            <person name="Ecker J.R."/>
        </authorList>
    </citation>
    <scope>NUCLEOTIDE SEQUENCE [LARGE SCALE MRNA]</scope>
    <source>
        <strain>cv. Columbia</strain>
    </source>
</reference>
<reference key="5">
    <citation type="submission" date="2006-07" db="EMBL/GenBank/DDBJ databases">
        <title>Large-scale analysis of RIKEN Arabidopsis full-length (RAFL) cDNAs.</title>
        <authorList>
            <person name="Totoki Y."/>
            <person name="Seki M."/>
            <person name="Ishida J."/>
            <person name="Nakajima M."/>
            <person name="Enju A."/>
            <person name="Kamiya A."/>
            <person name="Narusaka M."/>
            <person name="Shin-i T."/>
            <person name="Nakagawa M."/>
            <person name="Sakamoto N."/>
            <person name="Oishi K."/>
            <person name="Kohara Y."/>
            <person name="Kobayashi M."/>
            <person name="Toyoda A."/>
            <person name="Sakaki Y."/>
            <person name="Sakurai T."/>
            <person name="Iida K."/>
            <person name="Akiyama K."/>
            <person name="Satou M."/>
            <person name="Toyoda T."/>
            <person name="Konagaya A."/>
            <person name="Carninci P."/>
            <person name="Kawai J."/>
            <person name="Hayashizaki Y."/>
            <person name="Shinozaki K."/>
        </authorList>
    </citation>
    <scope>NUCLEOTIDE SEQUENCE [LARGE SCALE MRNA]</scope>
    <source>
        <strain>cv. Columbia</strain>
    </source>
</reference>
<reference key="6">
    <citation type="submission" date="2009-03" db="EMBL/GenBank/DDBJ databases">
        <title>ORF cloning and analysis of Arabidopsis transcription factor genes.</title>
        <authorList>
            <person name="Fujita M."/>
            <person name="Mizukado S."/>
            <person name="Seki M."/>
            <person name="Shinozaki K."/>
            <person name="Mitsuda N."/>
            <person name="Takiguchi Y."/>
            <person name="Takagi M."/>
        </authorList>
    </citation>
    <scope>NUCLEOTIDE SEQUENCE [LARGE SCALE MRNA]</scope>
</reference>
<reference key="7">
    <citation type="journal article" date="2004" name="Plant Mol. Biol.">
        <title>Identification of a novel plant MAR DNA binding protein localized on chromosomal surfaces.</title>
        <authorList>
            <person name="Fujimoto S."/>
            <person name="Matsunaga S."/>
            <person name="Yonemura M."/>
            <person name="Uchiyama S."/>
            <person name="Azuma T."/>
            <person name="Fukui K."/>
        </authorList>
    </citation>
    <scope>IDENTIFICATION</scope>
    <scope>GENE FAMILY</scope>
    <scope>NOMENCLATURE</scope>
    <source>
        <strain>cv. Columbia</strain>
    </source>
</reference>
<reference key="8">
    <citation type="journal article" date="2007" name="Plant J.">
        <title>Overexpression of a chromatin architecture-controlling AT-hook protein extends leaf longevity and increases the post-harvest storage life of plants.</title>
        <authorList>
            <person name="Lim P.O."/>
            <person name="Kim Y."/>
            <person name="Breeze E."/>
            <person name="Koo J.C."/>
            <person name="Woo H.R."/>
            <person name="Ryu J.S."/>
            <person name="Park D.H."/>
            <person name="Beynon J."/>
            <person name="Tabrett A."/>
            <person name="Buchanan-Wollaston V."/>
            <person name="Nam H.G."/>
        </authorList>
    </citation>
    <scope>FUNCTION</scope>
    <scope>SUBCELLULAR LOCATION</scope>
</reference>
<reference key="9">
    <citation type="journal article" date="2008" name="Plant J.">
        <title>The AT-hook-containing proteins SOB3/AHL29 and ESC/AHL27 are negative modulators of hypocotyl growth in Arabidopsis.</title>
        <authorList>
            <person name="Street I.H."/>
            <person name="Shah P.K."/>
            <person name="Smith A.M."/>
            <person name="Avery N."/>
            <person name="Neff M.M."/>
        </authorList>
    </citation>
    <scope>FUNCTION</scope>
    <scope>TISSUE SPECIFICITY</scope>
    <scope>SUBCELLULAR LOCATION</scope>
    <scope>DISRUPTION PHENOTYPE</scope>
</reference>
<reference key="10">
    <citation type="journal article" date="2009" name="Plant Mol. Biol.">
        <title>Over-expression of an AT-hook gene, AHL22, delays flowering and inhibits the elongation of the hypocotyl in Arabidopsis thaliana.</title>
        <authorList>
            <person name="Xiao C."/>
            <person name="Chen F."/>
            <person name="Yu X."/>
            <person name="Lin C."/>
            <person name="Fu Y.F."/>
        </authorList>
    </citation>
    <scope>FUNCTION</scope>
</reference>
<reference key="11">
    <citation type="journal article" date="2010" name="J. Integr. Plant Biol.">
        <title>Overexpression of AHL20 negatively regulates defenses in Arabidopsis.</title>
        <authorList>
            <person name="Lu H."/>
            <person name="Zou Y."/>
            <person name="Feng N."/>
        </authorList>
    </citation>
    <scope>FUNCTION</scope>
</reference>
<reference key="12">
    <citation type="journal article" date="2013" name="Proc. Natl. Acad. Sci. U.S.A.">
        <title>Arabidopsis thaliana AHL family modulates hypocotyl growth redundantly by interacting with each other via the PPC/DUF296 domain.</title>
        <authorList>
            <person name="Zhao J."/>
            <person name="Favero D.S."/>
            <person name="Peng H."/>
            <person name="Neff M.M."/>
        </authorList>
    </citation>
    <scope>GENE FAMILY</scope>
    <scope>MUTAGENESIS OF ARG-91</scope>
    <scope>SUBUNIT</scope>
    <scope>INTERACTION WITH AHL12; AHL25; AHL29; TCP4; TCP13; EF114; ATAF2/NAC081; H2B.1; H3.3 AND H4</scope>
    <scope>DOMAIN PPC</scope>
</reference>
<feature type="chain" id="PRO_0000087056" description="AT-hook motif nuclear-localized protein 27">
    <location>
        <begin position="1"/>
        <end position="311"/>
    </location>
</feature>
<feature type="domain" description="PPC" evidence="2">
    <location>
        <begin position="110"/>
        <end position="258"/>
    </location>
</feature>
<feature type="DNA-binding region" description="A.T hook" evidence="1">
    <location>
        <begin position="86"/>
        <end position="98"/>
    </location>
</feature>
<feature type="region of interest" description="Disordered" evidence="3">
    <location>
        <begin position="40"/>
        <end position="105"/>
    </location>
</feature>
<feature type="region of interest" description="Required for the binding to non-AHL interactors" evidence="9">
    <location>
        <begin position="178"/>
        <end position="183"/>
    </location>
</feature>
<feature type="region of interest" description="Disordered" evidence="3">
    <location>
        <begin position="246"/>
        <end position="311"/>
    </location>
</feature>
<feature type="compositionally biased region" description="Basic and acidic residues" evidence="3">
    <location>
        <begin position="55"/>
        <end position="75"/>
    </location>
</feature>
<feature type="compositionally biased region" description="Gly residues" evidence="3">
    <location>
        <begin position="252"/>
        <end position="262"/>
    </location>
</feature>
<feature type="compositionally biased region" description="Low complexity" evidence="3">
    <location>
        <begin position="263"/>
        <end position="277"/>
    </location>
</feature>
<feature type="compositionally biased region" description="Gly residues" evidence="3">
    <location>
        <begin position="278"/>
        <end position="292"/>
    </location>
</feature>
<feature type="mutagenesis site" description="In esc-11; Exhibits a long hypocotyl phenotype in the light." evidence="9">
    <original>R</original>
    <variation>H</variation>
    <location>
        <position position="91"/>
    </location>
</feature>
<keyword id="KW-0053">Apoptosis</keyword>
<keyword id="KW-0238">DNA-binding</keyword>
<keyword id="KW-0287">Flowering</keyword>
<keyword id="KW-0391">Immunity</keyword>
<keyword id="KW-0399">Innate immunity</keyword>
<keyword id="KW-0539">Nucleus</keyword>
<keyword id="KW-0611">Plant defense</keyword>
<keyword id="KW-1185">Reference proteome</keyword>
<keyword id="KW-0804">Transcription</keyword>
<keyword id="KW-0805">Transcription regulation</keyword>
<evidence type="ECO:0000255" key="1"/>
<evidence type="ECO:0000255" key="2">
    <source>
        <dbReference type="PROSITE-ProRule" id="PRU01078"/>
    </source>
</evidence>
<evidence type="ECO:0000256" key="3">
    <source>
        <dbReference type="SAM" id="MobiDB-lite"/>
    </source>
</evidence>
<evidence type="ECO:0000269" key="4">
    <source>
    </source>
</evidence>
<evidence type="ECO:0000269" key="5">
    <source>
    </source>
</evidence>
<evidence type="ECO:0000269" key="6">
    <source>
    </source>
</evidence>
<evidence type="ECO:0000269" key="7">
    <source>
    </source>
</evidence>
<evidence type="ECO:0000269" key="8">
    <source>
    </source>
</evidence>
<evidence type="ECO:0000269" key="9">
    <source>
    </source>
</evidence>
<evidence type="ECO:0000303" key="10">
    <source>
    </source>
</evidence>
<evidence type="ECO:0000303" key="11">
    <source>
    </source>
</evidence>
<evidence type="ECO:0000303" key="12">
    <source>
    </source>
</evidence>
<evidence type="ECO:0000312" key="13">
    <source>
        <dbReference type="Araport" id="AT1G20900"/>
    </source>
</evidence>
<evidence type="ECO:0000312" key="14">
    <source>
        <dbReference type="EMBL" id="AAD30602.1"/>
    </source>
</evidence>
<evidence type="ECO:0000312" key="15">
    <source>
        <dbReference type="EMBL" id="AAF07197.1"/>
    </source>
</evidence>
<evidence type="ECO:0000312" key="16">
    <source>
        <dbReference type="EMBL" id="FAA00298.1"/>
    </source>
</evidence>
<proteinExistence type="evidence at protein level"/>
<dbReference type="EMBL" id="AF194974">
    <property type="protein sequence ID" value="AAF07197.1"/>
    <property type="molecule type" value="mRNA"/>
</dbReference>
<dbReference type="EMBL" id="AC007369">
    <property type="protein sequence ID" value="AAD30602.1"/>
    <property type="molecule type" value="Genomic_DNA"/>
</dbReference>
<dbReference type="EMBL" id="CP002684">
    <property type="protein sequence ID" value="AEE30038.1"/>
    <property type="molecule type" value="Genomic_DNA"/>
</dbReference>
<dbReference type="EMBL" id="BT006460">
    <property type="protein sequence ID" value="AAP21268.1"/>
    <property type="molecule type" value="mRNA"/>
</dbReference>
<dbReference type="EMBL" id="AK228296">
    <property type="protein sequence ID" value="BAF00240.1"/>
    <property type="molecule type" value="mRNA"/>
</dbReference>
<dbReference type="EMBL" id="AB493469">
    <property type="protein sequence ID" value="BAH30307.1"/>
    <property type="molecule type" value="mRNA"/>
</dbReference>
<dbReference type="EMBL" id="BR000363">
    <property type="protein sequence ID" value="FAA00298.1"/>
    <property type="molecule type" value="mRNA"/>
</dbReference>
<dbReference type="PIR" id="F86341">
    <property type="entry name" value="F86341"/>
</dbReference>
<dbReference type="RefSeq" id="NP_173514.1">
    <property type="nucleotide sequence ID" value="NM_101943.2"/>
</dbReference>
<dbReference type="SMR" id="Q9S7C9"/>
<dbReference type="BioGRID" id="23922">
    <property type="interactions" value="17"/>
</dbReference>
<dbReference type="FunCoup" id="Q9S7C9">
    <property type="interactions" value="180"/>
</dbReference>
<dbReference type="STRING" id="3702.Q9S7C9"/>
<dbReference type="GlyGen" id="Q9S7C9">
    <property type="glycosylation" value="1 site"/>
</dbReference>
<dbReference type="PaxDb" id="3702-AT1G20900.1"/>
<dbReference type="ProteomicsDB" id="244845"/>
<dbReference type="EnsemblPlants" id="AT1G20900.1">
    <property type="protein sequence ID" value="AT1G20900.1"/>
    <property type="gene ID" value="AT1G20900"/>
</dbReference>
<dbReference type="GeneID" id="838683"/>
<dbReference type="Gramene" id="AT1G20900.1">
    <property type="protein sequence ID" value="AT1G20900.1"/>
    <property type="gene ID" value="AT1G20900"/>
</dbReference>
<dbReference type="KEGG" id="ath:AT1G20900"/>
<dbReference type="Araport" id="AT1G20900"/>
<dbReference type="TAIR" id="AT1G20900">
    <property type="gene designation" value="AHL27"/>
</dbReference>
<dbReference type="eggNOG" id="ENOG502QV94">
    <property type="taxonomic scope" value="Eukaryota"/>
</dbReference>
<dbReference type="HOGENOM" id="CLU_039808_2_2_1"/>
<dbReference type="InParanoid" id="Q9S7C9"/>
<dbReference type="OMA" id="GASRYFY"/>
<dbReference type="OrthoDB" id="2156856at2759"/>
<dbReference type="PhylomeDB" id="Q9S7C9"/>
<dbReference type="PRO" id="PR:Q9S7C9"/>
<dbReference type="Proteomes" id="UP000006548">
    <property type="component" value="Chromosome 1"/>
</dbReference>
<dbReference type="ExpressionAtlas" id="Q9S7C9">
    <property type="expression patterns" value="baseline and differential"/>
</dbReference>
<dbReference type="GO" id="GO:0005634">
    <property type="term" value="C:nucleus"/>
    <property type="evidence" value="ECO:0000314"/>
    <property type="project" value="UniProtKB"/>
</dbReference>
<dbReference type="GO" id="GO:0003690">
    <property type="term" value="F:double-stranded DNA binding"/>
    <property type="evidence" value="ECO:0000314"/>
    <property type="project" value="TAIR"/>
</dbReference>
<dbReference type="GO" id="GO:0042393">
    <property type="term" value="F:histone binding"/>
    <property type="evidence" value="ECO:0000353"/>
    <property type="project" value="UniProtKB"/>
</dbReference>
<dbReference type="GO" id="GO:0003680">
    <property type="term" value="F:minor groove of adenine-thymine-rich DNA binding"/>
    <property type="evidence" value="ECO:0000314"/>
    <property type="project" value="TAIR"/>
</dbReference>
<dbReference type="GO" id="GO:0006325">
    <property type="term" value="P:chromatin organization"/>
    <property type="evidence" value="ECO:0000315"/>
    <property type="project" value="TAIR"/>
</dbReference>
<dbReference type="GO" id="GO:0009908">
    <property type="term" value="P:flower development"/>
    <property type="evidence" value="ECO:0007669"/>
    <property type="project" value="UniProtKB-KW"/>
</dbReference>
<dbReference type="GO" id="GO:0045087">
    <property type="term" value="P:innate immune response"/>
    <property type="evidence" value="ECO:0007669"/>
    <property type="project" value="UniProtKB-KW"/>
</dbReference>
<dbReference type="GO" id="GO:0010150">
    <property type="term" value="P:leaf senescence"/>
    <property type="evidence" value="ECO:0000315"/>
    <property type="project" value="TAIR"/>
</dbReference>
<dbReference type="GO" id="GO:0045824">
    <property type="term" value="P:negative regulation of innate immune response"/>
    <property type="evidence" value="ECO:0000315"/>
    <property type="project" value="UniProtKB"/>
</dbReference>
<dbReference type="GO" id="GO:0009640">
    <property type="term" value="P:photomorphogenesis"/>
    <property type="evidence" value="ECO:0000315"/>
    <property type="project" value="TAIR"/>
</dbReference>
<dbReference type="GO" id="GO:0010228">
    <property type="term" value="P:vegetative to reproductive phase transition of meristem"/>
    <property type="evidence" value="ECO:0000315"/>
    <property type="project" value="UniProtKB"/>
</dbReference>
<dbReference type="CDD" id="cd11378">
    <property type="entry name" value="DUF296"/>
    <property type="match status" value="1"/>
</dbReference>
<dbReference type="FunFam" id="3.30.1330.80:FF:000002">
    <property type="entry name" value="AT-hook motif nuclear-localized protein"/>
    <property type="match status" value="1"/>
</dbReference>
<dbReference type="Gene3D" id="3.30.1330.80">
    <property type="entry name" value="Hypothetical protein, similar to alpha- acetolactate decarboxylase, domain 2"/>
    <property type="match status" value="1"/>
</dbReference>
<dbReference type="InterPro" id="IPR014476">
    <property type="entry name" value="AHL15-29"/>
</dbReference>
<dbReference type="InterPro" id="IPR005175">
    <property type="entry name" value="PPC_dom"/>
</dbReference>
<dbReference type="PANTHER" id="PTHR31100">
    <property type="entry name" value="AT-HOOK MOTIF NUCLEAR-LOCALIZED PROTEIN 15"/>
    <property type="match status" value="1"/>
</dbReference>
<dbReference type="PANTHER" id="PTHR31100:SF55">
    <property type="entry name" value="AT-HOOK MOTIF NUCLEAR-LOCALIZED PROTEIN 27"/>
    <property type="match status" value="1"/>
</dbReference>
<dbReference type="Pfam" id="PF03479">
    <property type="entry name" value="PCC"/>
    <property type="match status" value="1"/>
</dbReference>
<dbReference type="PIRSF" id="PIRSF016021">
    <property type="entry name" value="ESCAROLA"/>
    <property type="match status" value="1"/>
</dbReference>
<dbReference type="SUPFAM" id="SSF117856">
    <property type="entry name" value="AF0104/ALDC/Ptd012-like"/>
    <property type="match status" value="1"/>
</dbReference>
<dbReference type="PROSITE" id="PS51742">
    <property type="entry name" value="PPC"/>
    <property type="match status" value="1"/>
</dbReference>
<accession>Q9S7C9</accession>
<accession>Q0WRK9</accession>
<sequence>MEGGYEQGGGASRYFHNLFRPEIHHQQLQPQGGINLIDQHHHQHQQHQQQQQPSDDSRESDHSNKDHHQQGRPDSDPNTSSSAPGKRPRGRPPGSKNKAKPPIIVTRDSPNALRSHVLEVSPGADIVESVSTYARRRGRGVSVLGGNGTVSNVTLRQPVTPGNGGGVSGGGGVVTLHGRFEILSLTGTVLPPPAPPGAGGLSIFLAGGQGQVVGGSVVAPLIASAPVILMAASFSNAVFERLPIEEEEEEGGGGGGGGGGGPPQMQQAPSASPPSGVTGQGQLGGNVGGYGFSGDPHLLGWGAGTPSRPPF</sequence>
<comment type="function">
    <text evidence="5 6 7 8">Transcription factor that specifically binds AT-rich DNA sequences related to the nuclear matrix attachment regions (MARs) (PubMed:17971039, PubMed:19517252). Negatively regulates plant innate immunity (PTI) to pathogens through the down-regulation of the PAMP-triggered FRK1 expression (PubMed:20738724). Acts redundantly with AHL18, AHL22 and AHL29 in the regulation of flowering and regulation of the hypocotyl elongation (PubMed:19517252). Acts as a chromatin remodeling factor that negatively regulates the leaf senescence (PubMed:17971039). Acts redundantly with AHL29/SOB3 to modulate hypocotyl growth inhibition in response to light (PubMed:18088311).</text>
</comment>
<comment type="subunit">
    <text evidence="9">Homodimer. Interacts with AHL12, AHL25, AHL29, TCP4, TCP13, EF114, ATAF2/NAC081, histone H2B.1, histone H3.3 and histone H4.</text>
</comment>
<comment type="subcellular location">
    <subcellularLocation>
        <location evidence="5 6">Nucleus</location>
    </subcellularLocation>
</comment>
<comment type="tissue specificity">
    <text evidence="6">Expressed in the hypocotyl and the vascular tissue of seedling.</text>
</comment>
<comment type="domain">
    <text evidence="9">The PPC domain mediates interactions between AHL proteins.</text>
</comment>
<comment type="disruption phenotype">
    <text evidence="6">AHL27 and AHL29 double mutant exhibit a long hypocotyl phenotype in the light.</text>
</comment>
<comment type="miscellaneous">
    <text evidence="4 5 8">Overexpression of AHL27 results in a decreased flg22-induced expression of FRK1 (PubMed:20738724). Overexpression causes also delay of leaf senescence, late flowering and modified leaf development (PubMed:10759496, PubMed:17971039).</text>
</comment>
<gene>
    <name evidence="11" type="primary">AHL27</name>
    <name evidence="15" type="synonym">ESC</name>
    <name evidence="12" type="synonym">ORE7</name>
    <name evidence="13" type="ordered locus">At1g20900</name>
    <name evidence="14" type="ORF">F9H16.12</name>
</gene>
<name>AHL27_ARATH</name>